<reference key="1">
    <citation type="journal article" date="1998" name="Nature">
        <title>Deciphering the biology of Mycobacterium tuberculosis from the complete genome sequence.</title>
        <authorList>
            <person name="Cole S.T."/>
            <person name="Brosch R."/>
            <person name="Parkhill J."/>
            <person name="Garnier T."/>
            <person name="Churcher C.M."/>
            <person name="Harris D.E."/>
            <person name="Gordon S.V."/>
            <person name="Eiglmeier K."/>
            <person name="Gas S."/>
            <person name="Barry C.E. III"/>
            <person name="Tekaia F."/>
            <person name="Badcock K."/>
            <person name="Basham D."/>
            <person name="Brown D."/>
            <person name="Chillingworth T."/>
            <person name="Connor R."/>
            <person name="Davies R.M."/>
            <person name="Devlin K."/>
            <person name="Feltwell T."/>
            <person name="Gentles S."/>
            <person name="Hamlin N."/>
            <person name="Holroyd S."/>
            <person name="Hornsby T."/>
            <person name="Jagels K."/>
            <person name="Krogh A."/>
            <person name="McLean J."/>
            <person name="Moule S."/>
            <person name="Murphy L.D."/>
            <person name="Oliver S."/>
            <person name="Osborne J."/>
            <person name="Quail M.A."/>
            <person name="Rajandream M.A."/>
            <person name="Rogers J."/>
            <person name="Rutter S."/>
            <person name="Seeger K."/>
            <person name="Skelton S."/>
            <person name="Squares S."/>
            <person name="Squares R."/>
            <person name="Sulston J.E."/>
            <person name="Taylor K."/>
            <person name="Whitehead S."/>
            <person name="Barrell B.G."/>
        </authorList>
    </citation>
    <scope>NUCLEOTIDE SEQUENCE [LARGE SCALE GENOMIC DNA]</scope>
    <source>
        <strain>ATCC 25618 / H37Rv</strain>
    </source>
</reference>
<reference key="2">
    <citation type="journal article" date="2009" name="PLoS Genet.">
        <title>Comprehensive functional analysis of Mycobacterium tuberculosis toxin-antitoxin systems: implications for pathogenesis, stress responses, and evolution.</title>
        <authorList>
            <person name="Ramage H.R."/>
            <person name="Connolly L.E."/>
            <person name="Cox J.S."/>
        </authorList>
    </citation>
    <scope>POSSIBLE FUNCTION</scope>
    <source>
        <strain>ATCC 35801 / TMC 107 / Erdman</strain>
    </source>
</reference>
<reference key="3">
    <citation type="journal article" date="2011" name="Mol. Cell. Proteomics">
        <title>Proteogenomic analysis of Mycobacterium tuberculosis by high resolution mass spectrometry.</title>
        <authorList>
            <person name="Kelkar D.S."/>
            <person name="Kumar D."/>
            <person name="Kumar P."/>
            <person name="Balakrishnan L."/>
            <person name="Muthusamy B."/>
            <person name="Yadav A.K."/>
            <person name="Shrivastava P."/>
            <person name="Marimuthu A."/>
            <person name="Anand S."/>
            <person name="Sundaram H."/>
            <person name="Kingsbury R."/>
            <person name="Harsha H.C."/>
            <person name="Nair B."/>
            <person name="Prasad T.S."/>
            <person name="Chauhan D.S."/>
            <person name="Katoch K."/>
            <person name="Katoch V.M."/>
            <person name="Kumar P."/>
            <person name="Chaerkady R."/>
            <person name="Ramachandran S."/>
            <person name="Dash D."/>
            <person name="Pandey A."/>
        </authorList>
    </citation>
    <scope>IDENTIFICATION BY MASS SPECTROMETRY [LARGE SCALE ANALYSIS]</scope>
    <source>
        <strain>ATCC 25618 / H37Rv</strain>
    </source>
</reference>
<keyword id="KW-0378">Hydrolase</keyword>
<keyword id="KW-0460">Magnesium</keyword>
<keyword id="KW-0479">Metal-binding</keyword>
<keyword id="KW-0540">Nuclease</keyword>
<keyword id="KW-1185">Reference proteome</keyword>
<keyword id="KW-1277">Toxin-antitoxin system</keyword>
<comment type="function">
    <text evidence="1 2">Toxic component of a type II toxin-antitoxin (TA) system. An RNase. Its cognate antitoxin is VapB48.</text>
</comment>
<comment type="cofactor">
    <cofactor evidence="1">
        <name>Mg(2+)</name>
        <dbReference type="ChEBI" id="CHEBI:18420"/>
    </cofactor>
</comment>
<comment type="similarity">
    <text evidence="1">Belongs to the PINc/VapC protein family.</text>
</comment>
<dbReference type="EC" id="3.1.-.-" evidence="1"/>
<dbReference type="EMBL" id="AL123456">
    <property type="protein sequence ID" value="CCP46521.1"/>
    <property type="molecule type" value="Genomic_DNA"/>
</dbReference>
<dbReference type="PIR" id="B70793">
    <property type="entry name" value="B70793"/>
</dbReference>
<dbReference type="RefSeq" id="NP_218214.1">
    <property type="nucleotide sequence ID" value="NC_000962.3"/>
</dbReference>
<dbReference type="RefSeq" id="WP_003899644.1">
    <property type="nucleotide sequence ID" value="NZ_NVQJ01000028.1"/>
</dbReference>
<dbReference type="SMR" id="P9WF47"/>
<dbReference type="STRING" id="83332.Rv3697c"/>
<dbReference type="PaxDb" id="83332-Rv3697c"/>
<dbReference type="DNASU" id="885492"/>
<dbReference type="GeneID" id="885492"/>
<dbReference type="KEGG" id="mtu:Rv3697c"/>
<dbReference type="KEGG" id="mtv:RVBD_3697c"/>
<dbReference type="PATRIC" id="fig|83332.111.peg.4111"/>
<dbReference type="TubercuList" id="Rv3697c"/>
<dbReference type="eggNOG" id="COG1848">
    <property type="taxonomic scope" value="Bacteria"/>
</dbReference>
<dbReference type="InParanoid" id="P9WF47"/>
<dbReference type="OrthoDB" id="556169at2"/>
<dbReference type="PhylomeDB" id="P9WF47"/>
<dbReference type="Proteomes" id="UP000001584">
    <property type="component" value="Chromosome"/>
</dbReference>
<dbReference type="GO" id="GO:0000287">
    <property type="term" value="F:magnesium ion binding"/>
    <property type="evidence" value="ECO:0007669"/>
    <property type="project" value="UniProtKB-UniRule"/>
</dbReference>
<dbReference type="GO" id="GO:0004540">
    <property type="term" value="F:RNA nuclease activity"/>
    <property type="evidence" value="ECO:0007669"/>
    <property type="project" value="InterPro"/>
</dbReference>
<dbReference type="GO" id="GO:0045926">
    <property type="term" value="P:negative regulation of growth"/>
    <property type="evidence" value="ECO:0007669"/>
    <property type="project" value="UniProtKB-ARBA"/>
</dbReference>
<dbReference type="Gene3D" id="3.40.50.1010">
    <property type="entry name" value="5'-nuclease"/>
    <property type="match status" value="1"/>
</dbReference>
<dbReference type="HAMAP" id="MF_00265">
    <property type="entry name" value="VapC_Nob1"/>
    <property type="match status" value="1"/>
</dbReference>
<dbReference type="InterPro" id="IPR006226">
    <property type="entry name" value="Mtu_PIN"/>
</dbReference>
<dbReference type="InterPro" id="IPR029060">
    <property type="entry name" value="PIN-like_dom_sf"/>
</dbReference>
<dbReference type="InterPro" id="IPR002716">
    <property type="entry name" value="PIN_dom"/>
</dbReference>
<dbReference type="InterPro" id="IPR022907">
    <property type="entry name" value="VapC_family"/>
</dbReference>
<dbReference type="NCBIfam" id="TIGR00028">
    <property type="entry name" value="Mtu_PIN_fam"/>
    <property type="match status" value="1"/>
</dbReference>
<dbReference type="Pfam" id="PF01850">
    <property type="entry name" value="PIN"/>
    <property type="match status" value="1"/>
</dbReference>
<dbReference type="SUPFAM" id="SSF88723">
    <property type="entry name" value="PIN domain-like"/>
    <property type="match status" value="1"/>
</dbReference>
<gene>
    <name evidence="1" type="primary">vapC48</name>
    <name type="ordered locus">Rv3697c</name>
</gene>
<evidence type="ECO:0000255" key="1">
    <source>
        <dbReference type="HAMAP-Rule" id="MF_00265"/>
    </source>
</evidence>
<evidence type="ECO:0000305" key="2">
    <source>
    </source>
</evidence>
<feature type="chain" id="PRO_0000407899" description="Ribonuclease VapC48">
    <location>
        <begin position="1"/>
        <end position="145"/>
    </location>
</feature>
<feature type="domain" description="PINc" evidence="1">
    <location>
        <begin position="15"/>
        <end position="141"/>
    </location>
</feature>
<feature type="binding site" evidence="1">
    <location>
        <position position="6"/>
    </location>
    <ligand>
        <name>Mg(2+)</name>
        <dbReference type="ChEBI" id="CHEBI:18420"/>
    </ligand>
</feature>
<feature type="binding site" evidence="1">
    <location>
        <position position="109"/>
    </location>
    <ligand>
        <name>Mg(2+)</name>
        <dbReference type="ChEBI" id="CHEBI:18420"/>
    </ligand>
</feature>
<accession>P9WF47</accession>
<accession>L0TG87</accession>
<accession>O69665</accession>
<accession>Q7D518</accession>
<protein>
    <recommendedName>
        <fullName evidence="1">Ribonuclease VapC48</fullName>
        <shortName evidence="1">RNase VapC48</shortName>
        <ecNumber evidence="1">3.1.-.-</ecNumber>
    </recommendedName>
    <alternativeName>
        <fullName evidence="1">Toxin VapC48</fullName>
    </alternativeName>
</protein>
<organism>
    <name type="scientific">Mycobacterium tuberculosis (strain ATCC 25618 / H37Rv)</name>
    <dbReference type="NCBI Taxonomy" id="83332"/>
    <lineage>
        <taxon>Bacteria</taxon>
        <taxon>Bacillati</taxon>
        <taxon>Actinomycetota</taxon>
        <taxon>Actinomycetes</taxon>
        <taxon>Mycobacteriales</taxon>
        <taxon>Mycobacteriaceae</taxon>
        <taxon>Mycobacterium</taxon>
        <taxon>Mycobacterium tuberculosis complex</taxon>
    </lineage>
</organism>
<sequence>MSETFDVDVLVHATHRASPFHDKAKTLVERFLAGPGLVYLLWPVALGYLRVVTHPTLLGAPLAPEVAVENIEQFTSRPHVRQVGEANGFWPVYRRVADPVKPRGNLVPDAHLVALMRHHGIATIWSHDRDFRKFEGIRIRDPFSG</sequence>
<proteinExistence type="evidence at protein level"/>
<name>VPC48_MYCTU</name>